<accession>C0HM02</accession>
<organism>
    <name type="scientific">Homo sapiens</name>
    <name type="common">Human</name>
    <dbReference type="NCBI Taxonomy" id="9606"/>
    <lineage>
        <taxon>Eukaryota</taxon>
        <taxon>Metazoa</taxon>
        <taxon>Chordata</taxon>
        <taxon>Craniata</taxon>
        <taxon>Vertebrata</taxon>
        <taxon>Euteleostomi</taxon>
        <taxon>Mammalia</taxon>
        <taxon>Eutheria</taxon>
        <taxon>Euarchontoglires</taxon>
        <taxon>Primates</taxon>
        <taxon>Haplorrhini</taxon>
        <taxon>Catarrhini</taxon>
        <taxon>Hominidae</taxon>
        <taxon>Homo</taxon>
    </lineage>
</organism>
<reference evidence="5" key="1">
    <citation type="journal article" date="2003" name="Nature">
        <title>The DNA sequence and analysis of human chromosome 14.</title>
        <authorList>
            <person name="Heilig R."/>
            <person name="Eckenberg R."/>
            <person name="Petit J.-L."/>
            <person name="Fonknechten N."/>
            <person name="Da Silva C."/>
            <person name="Cattolico L."/>
            <person name="Levy M."/>
            <person name="Barbe V."/>
            <person name="De Berardinis V."/>
            <person name="Ureta-Vidal A."/>
            <person name="Pelletier E."/>
            <person name="Vico V."/>
            <person name="Anthouard V."/>
            <person name="Rowen L."/>
            <person name="Madan A."/>
            <person name="Qin S."/>
            <person name="Sun H."/>
            <person name="Du H."/>
            <person name="Pepin K."/>
            <person name="Artiguenave F."/>
            <person name="Robert C."/>
            <person name="Cruaud C."/>
            <person name="Bruels T."/>
            <person name="Jaillon O."/>
            <person name="Friedlander L."/>
            <person name="Samson G."/>
            <person name="Brottier P."/>
            <person name="Cure S."/>
            <person name="Segurens B."/>
            <person name="Aniere F."/>
            <person name="Samain S."/>
            <person name="Crespeau H."/>
            <person name="Abbasi N."/>
            <person name="Aiach N."/>
            <person name="Boscus D."/>
            <person name="Dickhoff R."/>
            <person name="Dors M."/>
            <person name="Dubois I."/>
            <person name="Friedman C."/>
            <person name="Gouyvenoux M."/>
            <person name="James R."/>
            <person name="Madan A."/>
            <person name="Mairey-Estrada B."/>
            <person name="Mangenot S."/>
            <person name="Martins N."/>
            <person name="Menard M."/>
            <person name="Oztas S."/>
            <person name="Ratcliffe A."/>
            <person name="Shaffer T."/>
            <person name="Trask B."/>
            <person name="Vacherie B."/>
            <person name="Bellemere C."/>
            <person name="Belser C."/>
            <person name="Besnard-Gonnet M."/>
            <person name="Bartol-Mavel D."/>
            <person name="Boutard M."/>
            <person name="Briez-Silla S."/>
            <person name="Combette S."/>
            <person name="Dufosse-Laurent V."/>
            <person name="Ferron C."/>
            <person name="Lechaplais C."/>
            <person name="Louesse C."/>
            <person name="Muselet D."/>
            <person name="Magdelenat G."/>
            <person name="Pateau E."/>
            <person name="Petit E."/>
            <person name="Sirvain-Trukniewicz P."/>
            <person name="Trybou A."/>
            <person name="Vega-Czarny N."/>
            <person name="Bataille E."/>
            <person name="Bluet E."/>
            <person name="Bordelais I."/>
            <person name="Dubois M."/>
            <person name="Dumont C."/>
            <person name="Guerin T."/>
            <person name="Haffray S."/>
            <person name="Hammadi R."/>
            <person name="Muanga J."/>
            <person name="Pellouin V."/>
            <person name="Robert D."/>
            <person name="Wunderle E."/>
            <person name="Gauguet G."/>
            <person name="Roy A."/>
            <person name="Sainte-Marthe L."/>
            <person name="Verdier J."/>
            <person name="Verdier-Discala C."/>
            <person name="Hillier L.W."/>
            <person name="Fulton L."/>
            <person name="McPherson J."/>
            <person name="Matsuda F."/>
            <person name="Wilson R."/>
            <person name="Scarpelli C."/>
            <person name="Gyapay G."/>
            <person name="Wincker P."/>
            <person name="Saurin W."/>
            <person name="Quetier F."/>
            <person name="Waterston R."/>
            <person name="Hood L."/>
            <person name="Weissenbach J."/>
        </authorList>
    </citation>
    <scope>NUCLEOTIDE SEQUENCE [LARGE SCALE GENOMIC DNA]</scope>
</reference>
<reference evidence="5" key="2">
    <citation type="journal article" date="2009" name="Mol. Cell. Biol.">
        <title>Translational control of protein kinase Ceta by two upstream open reading frames.</title>
        <authorList>
            <person name="Raveh-Amit H."/>
            <person name="Maissel A."/>
            <person name="Poller J."/>
            <person name="Marom L."/>
            <person name="Elroy-Stein O."/>
            <person name="Shapira M."/>
            <person name="Livneh E."/>
        </authorList>
    </citation>
    <scope>FUNCTION</scope>
</reference>
<reference evidence="5" key="3">
    <citation type="journal article" date="2021" name="Proc. Natl. Acad. Sci. U.S.A.">
        <title>Unraveling the hidden role of a uORF-encoded peptide as a kinase inhibitor of PKCs.</title>
        <authorList>
            <person name="Jayaram D.R."/>
            <person name="Frost S."/>
            <person name="Argov C."/>
            <person name="Liju V.B."/>
            <person name="Anto N.P."/>
            <person name="Muraleedharan A."/>
            <person name="Ben-Ari A."/>
            <person name="Sinay R."/>
            <person name="Smoly I."/>
            <person name="Novoplansky O."/>
            <person name="Isakov N."/>
            <person name="Toiber D."/>
            <person name="Keasar C."/>
            <person name="Elkabets M."/>
            <person name="Yeger-Lotem E."/>
            <person name="Livneh E."/>
        </authorList>
    </citation>
    <scope>FUNCTION</scope>
    <scope>INTERACTION WITH PROTEIN KINASE C ETA; PRKCD; PRKCQ AND PRKCE</scope>
    <scope>MUTAGENESIS OF ALA-6</scope>
</reference>
<dbReference type="EMBL" id="AL138996">
    <property type="status" value="NOT_ANNOTATED_CDS"/>
    <property type="molecule type" value="Genomic_DNA"/>
</dbReference>
<dbReference type="AGR" id="HGNC:9403"/>
<dbReference type="GeneCards" id="PRKCH"/>
<dbReference type="HGNC" id="HGNC:9403">
    <property type="gene designation" value="PRKCH"/>
</dbReference>
<dbReference type="MalaCards" id="PRKCH"/>
<dbReference type="OrthoDB" id="63267at2759"/>
<dbReference type="Proteomes" id="UP000005640">
    <property type="component" value="Unplaced"/>
</dbReference>
<dbReference type="GO" id="GO:0120283">
    <property type="term" value="F:protein serine/threonine kinase binding"/>
    <property type="evidence" value="ECO:0000353"/>
    <property type="project" value="UniProtKB"/>
</dbReference>
<dbReference type="GO" id="GO:0030291">
    <property type="term" value="F:protein serine/threonine kinase inhibitor activity"/>
    <property type="evidence" value="ECO:0000314"/>
    <property type="project" value="UniProtKB"/>
</dbReference>
<dbReference type="GO" id="GO:0045182">
    <property type="term" value="F:translation regulator activity"/>
    <property type="evidence" value="ECO:0000314"/>
    <property type="project" value="UniProtKB"/>
</dbReference>
<dbReference type="GO" id="GO:0034198">
    <property type="term" value="P:cellular response to amino acid starvation"/>
    <property type="evidence" value="ECO:0000314"/>
    <property type="project" value="UniProtKB"/>
</dbReference>
<dbReference type="GO" id="GO:0071901">
    <property type="term" value="P:negative regulation of protein serine/threonine kinase activity"/>
    <property type="evidence" value="ECO:0000314"/>
    <property type="project" value="UniProtKB"/>
</dbReference>
<dbReference type="GO" id="GO:0017148">
    <property type="term" value="P:negative regulation of translation"/>
    <property type="evidence" value="ECO:0000314"/>
    <property type="project" value="UniProtKB"/>
</dbReference>
<dbReference type="GO" id="GO:0032056">
    <property type="term" value="P:positive regulation of translation in response to stress"/>
    <property type="evidence" value="ECO:0000314"/>
    <property type="project" value="UniProtKB"/>
</dbReference>
<dbReference type="InterPro" id="IPR054137">
    <property type="entry name" value="PRKCH_uORF2"/>
</dbReference>
<dbReference type="Pfam" id="PF21952">
    <property type="entry name" value="PRKCH_uORF2"/>
    <property type="match status" value="1"/>
</dbReference>
<evidence type="ECO:0000269" key="1">
    <source>
    </source>
</evidence>
<evidence type="ECO:0000269" key="2">
    <source>
    </source>
</evidence>
<evidence type="ECO:0000303" key="3">
    <source>
    </source>
</evidence>
<evidence type="ECO:0000303" key="4">
    <source>
    </source>
</evidence>
<evidence type="ECO:0000305" key="5"/>
<evidence type="ECO:0000312" key="6">
    <source>
        <dbReference type="HGNC" id="HGNC:9403"/>
    </source>
</evidence>
<comment type="function">
    <text evidence="1 2">Product of an upstream open reading frame (ORF) of PRKCH which regulates translation of the downstream protein kinase C eta (PKC-eta) ORF (PubMed:19797084, PubMed:34593629). Functions as a repressive element that maintains low basal levels of PKC-eta in growing cells but enhances its expression during stress conditions induced by amino acid starvation in a EIF2AK4/GCN2-dependent manner (PubMed:19797084, PubMed:34593629). In addition to its role in regulating PKC-eta translation, also inhibits the kinase activity of PKC-eta as well as other protein kinases including PRKCD, PRKCQ and PRKCE but not PRKCA, PRKCG or PRKCZ (PubMed:34593629).</text>
</comment>
<comment type="subunit">
    <text evidence="2">Interacts with protein kinase C eta as well as other protein kinases including PRKCD, PRKCQ and PRKCE but not with PRKCG or PRKCZ; the interactions lead to inhibition of kinase activity.</text>
</comment>
<comment type="miscellaneous">
    <text evidence="2">Suppresses proliferation and migration of cancer cells.</text>
</comment>
<sequence>MASRGALRRCLSPGLPRLLHLSRGLA</sequence>
<proteinExistence type="evidence at protein level"/>
<gene>
    <name evidence="6" type="primary">PRKCH</name>
</gene>
<keyword id="KW-0649">Protein kinase inhibitor</keyword>
<keyword id="KW-1185">Reference proteome</keyword>
<keyword id="KW-0346">Stress response</keyword>
<keyword id="KW-0810">Translation regulation</keyword>
<name>PKHUO_HUMAN</name>
<protein>
    <recommendedName>
        <fullName evidence="5">PRKCH upstream open reading frame 2</fullName>
        <shortName evidence="3">uORF2</shortName>
    </recommendedName>
    <alternativeName>
        <fullName evidence="4">Protein uPEP2</fullName>
    </alternativeName>
</protein>
<feature type="chain" id="PRO_0000455275" description="PRKCH upstream open reading frame 2">
    <location>
        <begin position="1"/>
        <end position="26"/>
    </location>
</feature>
<feature type="mutagenesis site" description="Abolishes kinase inhibitor activity and converts peptide to a substrate for PRKCH and PRKCE but not for PRKCA." evidence="2">
    <original>A</original>
    <variation>S</variation>
    <variation>T</variation>
    <location>
        <position position="6"/>
    </location>
</feature>